<accession>Q06842</accession>
<accession>P05975</accession>
<accession>Q9HPD2</accession>
<comment type="function">
    <text evidence="1">Binds to 23S rRNA. One of the proteins that surrounds the polypeptide exit tunnel on the outside of the ribosome.</text>
</comment>
<comment type="subunit">
    <text evidence="1">Part of the 50S ribosomal subunit. Contacts protein L29.</text>
</comment>
<comment type="similarity">
    <text evidence="1">Belongs to the universal ribosomal protein uL23 family.</text>
</comment>
<proteinExistence type="evidence at protein level"/>
<feature type="initiator methionine" description="Removed" evidence="2">
    <location>
        <position position="1"/>
    </location>
</feature>
<feature type="chain" id="PRO_0000129436" description="Large ribosomal subunit protein uL23">
    <location>
        <begin position="2"/>
        <end position="84"/>
    </location>
</feature>
<feature type="sequence conflict" description="In Ref. 3; AA sequence." evidence="3" ref="3">
    <original>S</original>
    <variation>A</variation>
    <location>
        <position position="2"/>
    </location>
</feature>
<protein>
    <recommendedName>
        <fullName evidence="1">Large ribosomal subunit protein uL23</fullName>
    </recommendedName>
    <alternativeName>
        <fullName evidence="3">50S ribosomal protein L23</fullName>
    </alternativeName>
</protein>
<organism>
    <name type="scientific">Halobacterium salinarum (strain ATCC 700922 / JCM 11081 / NRC-1)</name>
    <name type="common">Halobacterium halobium</name>
    <dbReference type="NCBI Taxonomy" id="64091"/>
    <lineage>
        <taxon>Archaea</taxon>
        <taxon>Methanobacteriati</taxon>
        <taxon>Methanobacteriota</taxon>
        <taxon>Stenosarchaea group</taxon>
        <taxon>Halobacteria</taxon>
        <taxon>Halobacteriales</taxon>
        <taxon>Halobacteriaceae</taxon>
        <taxon>Halobacterium</taxon>
        <taxon>Halobacterium salinarum NRC-34001</taxon>
    </lineage>
</organism>
<name>RL23_HALSA</name>
<keyword id="KW-0903">Direct protein sequencing</keyword>
<keyword id="KW-1185">Reference proteome</keyword>
<keyword id="KW-0687">Ribonucleoprotein</keyword>
<keyword id="KW-0689">Ribosomal protein</keyword>
<keyword id="KW-0694">RNA-binding</keyword>
<keyword id="KW-0699">rRNA-binding</keyword>
<sequence length="84" mass="9381">MSSIIDYPLVTEKAMDEMDFQNKLQFIVDIDAAKPEIRDVVESEYDVTVVDVNTQITPEAEKKATVKLSAEDDAQDVASRIGVF</sequence>
<evidence type="ECO:0000255" key="1">
    <source>
        <dbReference type="HAMAP-Rule" id="MF_01369"/>
    </source>
</evidence>
<evidence type="ECO:0000269" key="2">
    <source>
    </source>
</evidence>
<evidence type="ECO:0000305" key="3"/>
<gene>
    <name evidence="1" type="primary">rpl23</name>
    <name type="ordered locus">VNG_1691G</name>
</gene>
<dbReference type="EMBL" id="AB006961">
    <property type="protein sequence ID" value="BAA22272.1"/>
    <property type="molecule type" value="Genomic_DNA"/>
</dbReference>
<dbReference type="EMBL" id="AE004437">
    <property type="protein sequence ID" value="AAG19938.1"/>
    <property type="molecule type" value="Genomic_DNA"/>
</dbReference>
<dbReference type="PIR" id="F84321">
    <property type="entry name" value="F84321"/>
</dbReference>
<dbReference type="PIR" id="S43422">
    <property type="entry name" value="S43422"/>
</dbReference>
<dbReference type="RefSeq" id="WP_010903236.1">
    <property type="nucleotide sequence ID" value="NC_002607.1"/>
</dbReference>
<dbReference type="SMR" id="Q06842"/>
<dbReference type="FunCoup" id="Q06842">
    <property type="interactions" value="134"/>
</dbReference>
<dbReference type="STRING" id="64091.VNG_1691G"/>
<dbReference type="PaxDb" id="64091-VNG_1691G"/>
<dbReference type="KEGG" id="hal:VNG_1691G"/>
<dbReference type="PATRIC" id="fig|64091.14.peg.1290"/>
<dbReference type="HOGENOM" id="CLU_037562_4_2_2"/>
<dbReference type="InParanoid" id="Q06842"/>
<dbReference type="OrthoDB" id="7751at2157"/>
<dbReference type="PhylomeDB" id="Q06842"/>
<dbReference type="Proteomes" id="UP000000554">
    <property type="component" value="Chromosome"/>
</dbReference>
<dbReference type="GO" id="GO:1990904">
    <property type="term" value="C:ribonucleoprotein complex"/>
    <property type="evidence" value="ECO:0007669"/>
    <property type="project" value="UniProtKB-KW"/>
</dbReference>
<dbReference type="GO" id="GO:0005840">
    <property type="term" value="C:ribosome"/>
    <property type="evidence" value="ECO:0007669"/>
    <property type="project" value="UniProtKB-KW"/>
</dbReference>
<dbReference type="GO" id="GO:0019843">
    <property type="term" value="F:rRNA binding"/>
    <property type="evidence" value="ECO:0007669"/>
    <property type="project" value="UniProtKB-UniRule"/>
</dbReference>
<dbReference type="GO" id="GO:0003735">
    <property type="term" value="F:structural constituent of ribosome"/>
    <property type="evidence" value="ECO:0007669"/>
    <property type="project" value="InterPro"/>
</dbReference>
<dbReference type="GO" id="GO:0006412">
    <property type="term" value="P:translation"/>
    <property type="evidence" value="ECO:0007669"/>
    <property type="project" value="UniProtKB-UniRule"/>
</dbReference>
<dbReference type="FunFam" id="3.30.70.330:FF:000532">
    <property type="entry name" value="50S ribosomal protein L23"/>
    <property type="match status" value="1"/>
</dbReference>
<dbReference type="Gene3D" id="3.30.70.330">
    <property type="match status" value="1"/>
</dbReference>
<dbReference type="HAMAP" id="MF_01369_A">
    <property type="entry name" value="Ribosomal_uL23_A"/>
    <property type="match status" value="1"/>
</dbReference>
<dbReference type="InterPro" id="IPR012677">
    <property type="entry name" value="Nucleotide-bd_a/b_plait_sf"/>
</dbReference>
<dbReference type="InterPro" id="IPR019985">
    <property type="entry name" value="Ribosomal_uL23"/>
</dbReference>
<dbReference type="InterPro" id="IPR013025">
    <property type="entry name" value="Ribosomal_uL23-like"/>
</dbReference>
<dbReference type="InterPro" id="IPR012678">
    <property type="entry name" value="Ribosomal_uL23/eL15/eS24_sf"/>
</dbReference>
<dbReference type="InterPro" id="IPR001014">
    <property type="entry name" value="Ribosomal_uL23_CS"/>
</dbReference>
<dbReference type="NCBIfam" id="NF011118">
    <property type="entry name" value="PRK14548.1"/>
    <property type="match status" value="1"/>
</dbReference>
<dbReference type="NCBIfam" id="TIGR03636">
    <property type="entry name" value="uL23_arch"/>
    <property type="match status" value="1"/>
</dbReference>
<dbReference type="PANTHER" id="PTHR11620">
    <property type="entry name" value="60S RIBOSOMAL PROTEIN L23A"/>
    <property type="match status" value="1"/>
</dbReference>
<dbReference type="Pfam" id="PF00276">
    <property type="entry name" value="Ribosomal_L23"/>
    <property type="match status" value="1"/>
</dbReference>
<dbReference type="SUPFAM" id="SSF54189">
    <property type="entry name" value="Ribosomal proteins S24e, L23 and L15e"/>
    <property type="match status" value="1"/>
</dbReference>
<dbReference type="PROSITE" id="PS00050">
    <property type="entry name" value="RIBOSOMAL_L23"/>
    <property type="match status" value="1"/>
</dbReference>
<reference key="1">
    <citation type="journal article" date="1993" name="Biochim. Biophys. Acta">
        <title>Nucleotide sequence of the genes encoding the L3, L4, and L23 equivalent ribosomal proteins from the archaebacterium Halobacterium halobium.</title>
        <authorList>
            <person name="Yuki Y."/>
            <person name="Kanechika R."/>
            <person name="Itoh T."/>
        </authorList>
    </citation>
    <scope>NUCLEOTIDE SEQUENCE [GENOMIC DNA]</scope>
</reference>
<reference key="2">
    <citation type="journal article" date="2000" name="Proc. Natl. Acad. Sci. U.S.A.">
        <title>Genome sequence of Halobacterium species NRC-1.</title>
        <authorList>
            <person name="Ng W.V."/>
            <person name="Kennedy S.P."/>
            <person name="Mahairas G.G."/>
            <person name="Berquist B."/>
            <person name="Pan M."/>
            <person name="Shukla H.D."/>
            <person name="Lasky S.R."/>
            <person name="Baliga N.S."/>
            <person name="Thorsson V."/>
            <person name="Sbrogna J."/>
            <person name="Swartzell S."/>
            <person name="Weir D."/>
            <person name="Hall J."/>
            <person name="Dahl T.A."/>
            <person name="Welti R."/>
            <person name="Goo Y.A."/>
            <person name="Leithauser B."/>
            <person name="Keller K."/>
            <person name="Cruz R."/>
            <person name="Danson M.J."/>
            <person name="Hough D.W."/>
            <person name="Maddocks D.G."/>
            <person name="Jablonski P.E."/>
            <person name="Krebs M.P."/>
            <person name="Angevine C.M."/>
            <person name="Dale H."/>
            <person name="Isenbarger T.A."/>
            <person name="Peck R.F."/>
            <person name="Pohlschroder M."/>
            <person name="Spudich J.L."/>
            <person name="Jung K.-H."/>
            <person name="Alam M."/>
            <person name="Freitas T."/>
            <person name="Hou S."/>
            <person name="Daniels C.J."/>
            <person name="Dennis P.P."/>
            <person name="Omer A.D."/>
            <person name="Ebhardt H."/>
            <person name="Lowe T.M."/>
            <person name="Liang P."/>
            <person name="Riley M."/>
            <person name="Hood L."/>
            <person name="DasSarma S."/>
        </authorList>
    </citation>
    <scope>NUCLEOTIDE SEQUENCE [LARGE SCALE GENOMIC DNA]</scope>
    <source>
        <strain>ATCC 700922 / JCM 11081 / NRC-1</strain>
    </source>
</reference>
<reference key="3">
    <citation type="journal article" date="1984" name="Can. J. Biochem. Cell Biol.">
        <title>Purification, properties, and N-terminal amino acid sequence of certain 50S ribosomal subunit proteins from the archaebacterium Halobacterium cutirubrum.</title>
        <authorList>
            <person name="Matheson A.T."/>
            <person name="Yaguchi M."/>
            <person name="Christensen P."/>
            <person name="Rollin C.F."/>
            <person name="Hasnain S."/>
        </authorList>
    </citation>
    <scope>PROTEIN SEQUENCE OF 2-19</scope>
</reference>